<reference key="1">
    <citation type="journal article" date="1998" name="J. Biol. Chem.">
        <title>GDP-L-fucose pyrophosphorylase: purification, cDNA cloning, and properties of the enzyme.</title>
        <authorList>
            <person name="Pastuszak I."/>
            <person name="Ketchum C."/>
            <person name="Hermanson G."/>
            <person name="Sjoberg E.J."/>
            <person name="Drake R."/>
            <person name="Elbein A.D."/>
        </authorList>
    </citation>
    <scope>NUCLEOTIDE SEQUENCE [GENOMIC DNA / MRNA] (ISOFORM 2)</scope>
    <scope>FUNCTION</scope>
    <scope>CATALYTIC ACTIVITY</scope>
    <scope>BIOPHYSICOCHEMICAL PROPERTIES</scope>
</reference>
<reference key="2">
    <citation type="journal article" date="2004" name="Nat. Genet.">
        <title>Complete sequencing and characterization of 21,243 full-length human cDNAs.</title>
        <authorList>
            <person name="Ota T."/>
            <person name="Suzuki Y."/>
            <person name="Nishikawa T."/>
            <person name="Otsuki T."/>
            <person name="Sugiyama T."/>
            <person name="Irie R."/>
            <person name="Wakamatsu A."/>
            <person name="Hayashi K."/>
            <person name="Sato H."/>
            <person name="Nagai K."/>
            <person name="Kimura K."/>
            <person name="Makita H."/>
            <person name="Sekine M."/>
            <person name="Obayashi M."/>
            <person name="Nishi T."/>
            <person name="Shibahara T."/>
            <person name="Tanaka T."/>
            <person name="Ishii S."/>
            <person name="Yamamoto J."/>
            <person name="Saito K."/>
            <person name="Kawai Y."/>
            <person name="Isono Y."/>
            <person name="Nakamura Y."/>
            <person name="Nagahari K."/>
            <person name="Murakami K."/>
            <person name="Yasuda T."/>
            <person name="Iwayanagi T."/>
            <person name="Wagatsuma M."/>
            <person name="Shiratori A."/>
            <person name="Sudo H."/>
            <person name="Hosoiri T."/>
            <person name="Kaku Y."/>
            <person name="Kodaira H."/>
            <person name="Kondo H."/>
            <person name="Sugawara M."/>
            <person name="Takahashi M."/>
            <person name="Kanda K."/>
            <person name="Yokoi T."/>
            <person name="Furuya T."/>
            <person name="Kikkawa E."/>
            <person name="Omura Y."/>
            <person name="Abe K."/>
            <person name="Kamihara K."/>
            <person name="Katsuta N."/>
            <person name="Sato K."/>
            <person name="Tanikawa M."/>
            <person name="Yamazaki M."/>
            <person name="Ninomiya K."/>
            <person name="Ishibashi T."/>
            <person name="Yamashita H."/>
            <person name="Murakawa K."/>
            <person name="Fujimori K."/>
            <person name="Tanai H."/>
            <person name="Kimata M."/>
            <person name="Watanabe M."/>
            <person name="Hiraoka S."/>
            <person name="Chiba Y."/>
            <person name="Ishida S."/>
            <person name="Ono Y."/>
            <person name="Takiguchi S."/>
            <person name="Watanabe S."/>
            <person name="Yosida M."/>
            <person name="Hotuta T."/>
            <person name="Kusano J."/>
            <person name="Kanehori K."/>
            <person name="Takahashi-Fujii A."/>
            <person name="Hara H."/>
            <person name="Tanase T.-O."/>
            <person name="Nomura Y."/>
            <person name="Togiya S."/>
            <person name="Komai F."/>
            <person name="Hara R."/>
            <person name="Takeuchi K."/>
            <person name="Arita M."/>
            <person name="Imose N."/>
            <person name="Musashino K."/>
            <person name="Yuuki H."/>
            <person name="Oshima A."/>
            <person name="Sasaki N."/>
            <person name="Aotsuka S."/>
            <person name="Yoshikawa Y."/>
            <person name="Matsunawa H."/>
            <person name="Ichihara T."/>
            <person name="Shiohata N."/>
            <person name="Sano S."/>
            <person name="Moriya S."/>
            <person name="Momiyama H."/>
            <person name="Satoh N."/>
            <person name="Takami S."/>
            <person name="Terashima Y."/>
            <person name="Suzuki O."/>
            <person name="Nakagawa S."/>
            <person name="Senoh A."/>
            <person name="Mizoguchi H."/>
            <person name="Goto Y."/>
            <person name="Shimizu F."/>
            <person name="Wakebe H."/>
            <person name="Hishigaki H."/>
            <person name="Watanabe T."/>
            <person name="Sugiyama A."/>
            <person name="Takemoto M."/>
            <person name="Kawakami B."/>
            <person name="Yamazaki M."/>
            <person name="Watanabe K."/>
            <person name="Kumagai A."/>
            <person name="Itakura S."/>
            <person name="Fukuzumi Y."/>
            <person name="Fujimori Y."/>
            <person name="Komiyama M."/>
            <person name="Tashiro H."/>
            <person name="Tanigami A."/>
            <person name="Fujiwara T."/>
            <person name="Ono T."/>
            <person name="Yamada K."/>
            <person name="Fujii Y."/>
            <person name="Ozaki K."/>
            <person name="Hirao M."/>
            <person name="Ohmori Y."/>
            <person name="Kawabata A."/>
            <person name="Hikiji T."/>
            <person name="Kobatake N."/>
            <person name="Inagaki H."/>
            <person name="Ikema Y."/>
            <person name="Okamoto S."/>
            <person name="Okitani R."/>
            <person name="Kawakami T."/>
            <person name="Noguchi S."/>
            <person name="Itoh T."/>
            <person name="Shigeta K."/>
            <person name="Senba T."/>
            <person name="Matsumura K."/>
            <person name="Nakajima Y."/>
            <person name="Mizuno T."/>
            <person name="Morinaga M."/>
            <person name="Sasaki M."/>
            <person name="Togashi T."/>
            <person name="Oyama M."/>
            <person name="Hata H."/>
            <person name="Watanabe M."/>
            <person name="Komatsu T."/>
            <person name="Mizushima-Sugano J."/>
            <person name="Satoh T."/>
            <person name="Shirai Y."/>
            <person name="Takahashi Y."/>
            <person name="Nakagawa K."/>
            <person name="Okumura K."/>
            <person name="Nagase T."/>
            <person name="Nomura N."/>
            <person name="Kikuchi H."/>
            <person name="Masuho Y."/>
            <person name="Yamashita R."/>
            <person name="Nakai K."/>
            <person name="Yada T."/>
            <person name="Nakamura Y."/>
            <person name="Ohara O."/>
            <person name="Isogai T."/>
            <person name="Sugano S."/>
        </authorList>
    </citation>
    <scope>NUCLEOTIDE SEQUENCE [LARGE SCALE MRNA] (ISOFORMS 5 AND 6)</scope>
    <source>
        <tissue>Tongue</tissue>
        <tissue>Uterus</tissue>
    </source>
</reference>
<reference key="3">
    <citation type="journal article" date="2006" name="Nature">
        <title>The DNA sequence and biological annotation of human chromosome 1.</title>
        <authorList>
            <person name="Gregory S.G."/>
            <person name="Barlow K.F."/>
            <person name="McLay K.E."/>
            <person name="Kaul R."/>
            <person name="Swarbreck D."/>
            <person name="Dunham A."/>
            <person name="Scott C.E."/>
            <person name="Howe K.L."/>
            <person name="Woodfine K."/>
            <person name="Spencer C.C.A."/>
            <person name="Jones M.C."/>
            <person name="Gillson C."/>
            <person name="Searle S."/>
            <person name="Zhou Y."/>
            <person name="Kokocinski F."/>
            <person name="McDonald L."/>
            <person name="Evans R."/>
            <person name="Phillips K."/>
            <person name="Atkinson A."/>
            <person name="Cooper R."/>
            <person name="Jones C."/>
            <person name="Hall R.E."/>
            <person name="Andrews T.D."/>
            <person name="Lloyd C."/>
            <person name="Ainscough R."/>
            <person name="Almeida J.P."/>
            <person name="Ambrose K.D."/>
            <person name="Anderson F."/>
            <person name="Andrew R.W."/>
            <person name="Ashwell R.I.S."/>
            <person name="Aubin K."/>
            <person name="Babbage A.K."/>
            <person name="Bagguley C.L."/>
            <person name="Bailey J."/>
            <person name="Beasley H."/>
            <person name="Bethel G."/>
            <person name="Bird C.P."/>
            <person name="Bray-Allen S."/>
            <person name="Brown J.Y."/>
            <person name="Brown A.J."/>
            <person name="Buckley D."/>
            <person name="Burton J."/>
            <person name="Bye J."/>
            <person name="Carder C."/>
            <person name="Chapman J.C."/>
            <person name="Clark S.Y."/>
            <person name="Clarke G."/>
            <person name="Clee C."/>
            <person name="Cobley V."/>
            <person name="Collier R.E."/>
            <person name="Corby N."/>
            <person name="Coville G.J."/>
            <person name="Davies J."/>
            <person name="Deadman R."/>
            <person name="Dunn M."/>
            <person name="Earthrowl M."/>
            <person name="Ellington A.G."/>
            <person name="Errington H."/>
            <person name="Frankish A."/>
            <person name="Frankland J."/>
            <person name="French L."/>
            <person name="Garner P."/>
            <person name="Garnett J."/>
            <person name="Gay L."/>
            <person name="Ghori M.R.J."/>
            <person name="Gibson R."/>
            <person name="Gilby L.M."/>
            <person name="Gillett W."/>
            <person name="Glithero R.J."/>
            <person name="Grafham D.V."/>
            <person name="Griffiths C."/>
            <person name="Griffiths-Jones S."/>
            <person name="Grocock R."/>
            <person name="Hammond S."/>
            <person name="Harrison E.S.I."/>
            <person name="Hart E."/>
            <person name="Haugen E."/>
            <person name="Heath P.D."/>
            <person name="Holmes S."/>
            <person name="Holt K."/>
            <person name="Howden P.J."/>
            <person name="Hunt A.R."/>
            <person name="Hunt S.E."/>
            <person name="Hunter G."/>
            <person name="Isherwood J."/>
            <person name="James R."/>
            <person name="Johnson C."/>
            <person name="Johnson D."/>
            <person name="Joy A."/>
            <person name="Kay M."/>
            <person name="Kershaw J.K."/>
            <person name="Kibukawa M."/>
            <person name="Kimberley A.M."/>
            <person name="King A."/>
            <person name="Knights A.J."/>
            <person name="Lad H."/>
            <person name="Laird G."/>
            <person name="Lawlor S."/>
            <person name="Leongamornlert D.A."/>
            <person name="Lloyd D.M."/>
            <person name="Loveland J."/>
            <person name="Lovell J."/>
            <person name="Lush M.J."/>
            <person name="Lyne R."/>
            <person name="Martin S."/>
            <person name="Mashreghi-Mohammadi M."/>
            <person name="Matthews L."/>
            <person name="Matthews N.S.W."/>
            <person name="McLaren S."/>
            <person name="Milne S."/>
            <person name="Mistry S."/>
            <person name="Moore M.J.F."/>
            <person name="Nickerson T."/>
            <person name="O'Dell C.N."/>
            <person name="Oliver K."/>
            <person name="Palmeiri A."/>
            <person name="Palmer S.A."/>
            <person name="Parker A."/>
            <person name="Patel D."/>
            <person name="Pearce A.V."/>
            <person name="Peck A.I."/>
            <person name="Pelan S."/>
            <person name="Phelps K."/>
            <person name="Phillimore B.J."/>
            <person name="Plumb R."/>
            <person name="Rajan J."/>
            <person name="Raymond C."/>
            <person name="Rouse G."/>
            <person name="Saenphimmachak C."/>
            <person name="Sehra H.K."/>
            <person name="Sheridan E."/>
            <person name="Shownkeen R."/>
            <person name="Sims S."/>
            <person name="Skuce C.D."/>
            <person name="Smith M."/>
            <person name="Steward C."/>
            <person name="Subramanian S."/>
            <person name="Sycamore N."/>
            <person name="Tracey A."/>
            <person name="Tromans A."/>
            <person name="Van Helmond Z."/>
            <person name="Wall M."/>
            <person name="Wallis J.M."/>
            <person name="White S."/>
            <person name="Whitehead S.L."/>
            <person name="Wilkinson J.E."/>
            <person name="Willey D.L."/>
            <person name="Williams H."/>
            <person name="Wilming L."/>
            <person name="Wray P.W."/>
            <person name="Wu Z."/>
            <person name="Coulson A."/>
            <person name="Vaudin M."/>
            <person name="Sulston J.E."/>
            <person name="Durbin R.M."/>
            <person name="Hubbard T."/>
            <person name="Wooster R."/>
            <person name="Dunham I."/>
            <person name="Carter N.P."/>
            <person name="McVean G."/>
            <person name="Ross M.T."/>
            <person name="Harrow J."/>
            <person name="Olson M.V."/>
            <person name="Beck S."/>
            <person name="Rogers J."/>
            <person name="Bentley D.R."/>
        </authorList>
    </citation>
    <scope>NUCLEOTIDE SEQUENCE [LARGE SCALE GENOMIC DNA]</scope>
</reference>
<reference key="4">
    <citation type="journal article" date="2004" name="Genome Res.">
        <title>The status, quality, and expansion of the NIH full-length cDNA project: the Mammalian Gene Collection (MGC).</title>
        <authorList>
            <consortium name="The MGC Project Team"/>
        </authorList>
    </citation>
    <scope>NUCLEOTIDE SEQUENCE [LARGE SCALE MRNA] OF 7-607 (ISOFORM 2)</scope>
    <source>
        <tissue>Colon</tissue>
        <tissue>Kidney</tissue>
    </source>
</reference>
<comment type="function">
    <text evidence="2">Catalyzes the formation of GDP-L-fucose from GTP and L-fucose-1-phosphate (PubMed:9804772). Functions as a salvage pathway to reutilize L-fucose arising from the turnover of glycoproteins and glycolipids (PubMed:9804772).</text>
</comment>
<comment type="catalytic activity">
    <reaction evidence="2">
        <text>beta-L-fucose 1-phosphate + GTP + H(+) = GDP-beta-L-fucose + diphosphate</text>
        <dbReference type="Rhea" id="RHEA:13549"/>
        <dbReference type="ChEBI" id="CHEBI:15378"/>
        <dbReference type="ChEBI" id="CHEBI:33019"/>
        <dbReference type="ChEBI" id="CHEBI:37565"/>
        <dbReference type="ChEBI" id="CHEBI:57268"/>
        <dbReference type="ChEBI" id="CHEBI:57273"/>
        <dbReference type="EC" id="2.7.7.30"/>
    </reaction>
    <physiologicalReaction direction="left-to-right" evidence="4">
        <dbReference type="Rhea" id="RHEA:13550"/>
    </physiologicalReaction>
</comment>
<comment type="biophysicochemical properties">
    <phDependence>
        <text evidence="4">Optimum pH is 6.8 to 7.8.</text>
    </phDependence>
</comment>
<comment type="subcellular location">
    <subcellularLocation>
        <location>Cytoplasm</location>
    </subcellularLocation>
</comment>
<comment type="alternative products">
    <event type="alternative splicing"/>
    <isoform>
        <id>O14772-1</id>
        <name>2</name>
        <sequence type="displayed"/>
    </isoform>
    <isoform>
        <id>Q59H18-1</id>
        <name>1</name>
        <sequence type="external"/>
    </isoform>
    <isoform>
        <id>Q59H18-3</id>
        <name>3</name>
        <sequence type="external"/>
    </isoform>
    <isoform>
        <id>Q59H18-4</id>
        <name>4</name>
        <sequence type="external"/>
    </isoform>
    <isoform>
        <id>O14772-2</id>
        <name>5</name>
        <sequence type="described" ref="VSP_059541 VSP_059543"/>
    </isoform>
    <isoform>
        <id>O14772-3</id>
        <name>6</name>
        <sequence type="described" ref="VSP_059541 VSP_059542"/>
    </isoform>
</comment>
<comment type="tissue specificity">
    <text>Expressed in many tissues.</text>
</comment>
<comment type="sequence caution" evidence="3">
    <conflict type="erroneous initiation">
        <sequence resource="EMBL-CDS" id="AAC73005"/>
    </conflict>
    <text>Truncated N-terminus.</text>
</comment>
<comment type="sequence caution" evidence="3">
    <conflict type="erroneous gene model prediction">
        <sequence resource="EMBL-CDS" id="AAC82511"/>
    </conflict>
</comment>
<comment type="sequence caution" evidence="3">
    <conflict type="erroneous initiation">
        <sequence resource="EMBL-CDS" id="AAH32308"/>
    </conflict>
    <text>Truncated N-terminus.</text>
</comment>
<comment type="sequence caution" evidence="3">
    <conflict type="erroneous translation">
        <sequence resource="EMBL-CDS" id="BAG65299"/>
    </conflict>
    <text>Wrong choice of CDS.</text>
</comment>
<organism>
    <name type="scientific">Homo sapiens</name>
    <name type="common">Human</name>
    <dbReference type="NCBI Taxonomy" id="9606"/>
    <lineage>
        <taxon>Eukaryota</taxon>
        <taxon>Metazoa</taxon>
        <taxon>Chordata</taxon>
        <taxon>Craniata</taxon>
        <taxon>Vertebrata</taxon>
        <taxon>Euteleostomi</taxon>
        <taxon>Mammalia</taxon>
        <taxon>Eutheria</taxon>
        <taxon>Euarchontoglires</taxon>
        <taxon>Primates</taxon>
        <taxon>Haplorrhini</taxon>
        <taxon>Catarrhini</taxon>
        <taxon>Hominidae</taxon>
        <taxon>Homo</taxon>
    </lineage>
</organism>
<evidence type="ECO:0000256" key="1">
    <source>
        <dbReference type="SAM" id="MobiDB-lite"/>
    </source>
</evidence>
<evidence type="ECO:0000269" key="2">
    <source>
    </source>
</evidence>
<evidence type="ECO:0000305" key="3"/>
<evidence type="ECO:0000305" key="4">
    <source>
    </source>
</evidence>
<evidence type="ECO:0000312" key="5">
    <source>
        <dbReference type="HGNC" id="HGNC:3825"/>
    </source>
</evidence>
<keyword id="KW-0025">Alternative splicing</keyword>
<keyword id="KW-0963">Cytoplasm</keyword>
<keyword id="KW-0342">GTP-binding</keyword>
<keyword id="KW-0547">Nucleotide-binding</keyword>
<keyword id="KW-0548">Nucleotidyltransferase</keyword>
<keyword id="KW-1267">Proteomics identification</keyword>
<keyword id="KW-1185">Reference proteome</keyword>
<keyword id="KW-0808">Transferase</keyword>
<name>FPGT_HUMAN</name>
<feature type="chain" id="PRO_0000087327" description="Fucose-1-phosphate guanylyltransferase">
    <location>
        <begin position="1"/>
        <end position="607"/>
    </location>
</feature>
<feature type="region of interest" description="Disordered" evidence="1">
    <location>
        <begin position="1"/>
        <end position="21"/>
    </location>
</feature>
<feature type="splice variant" id="VSP_059541" description="In isoform 5 and isoform 6." evidence="3">
    <location>
        <begin position="1"/>
        <end position="13"/>
    </location>
</feature>
<feature type="splice variant" id="VSP_059542" description="In isoform 6." evidence="3">
    <original>GGYSQRLPNASALGKIFTALPLGNPIYQMLELKLAMYIDFPLNMNPGILVTCADDIELYSIGEFEFIRFDKPGFTALAHPSSLTIGTTHGVFVLDPFDDLKHRDLEYRSCHRFLHKPSIEKMYQFNAVCRPGNFCQQDFAGGDIADLKLDSDYVYTDSLFYMDHKSAKMLLAFYEKIGTLSCEIDAYGDFLQALGPGATVEYTRNTSNVIKEESELVEMRQRIFHLLKGTSLNVVVLNNSKFYHIGTTEEYLFYFTSDNSLKSELGLQSITFSIFPDIPECSGKTSCIIQSILDSRCSVAPGSVVEYSRLGPDVSVGENCIISGSYILTKAALPAHSFVCSLSLKMNRCLKYATMAFGVQDNLKKSVKTLSDIKLLQFFGVCFLSCLDVWNLKVTEELFSGNKTCLSLWTARIFPVCSSLSDSVITSLKMLNAVKNKSAFSLNSYKLLSIEEMLIYKDVEDMITYREQIFLEISLKSSLM</original>
    <variation>VSFQIYQNALAKHPVSFKAYWIQDVLWHLAQLWSIPDWGLMFQLGKTALLVVLTS</variation>
    <location>
        <begin position="128"/>
        <end position="607"/>
    </location>
</feature>
<feature type="splice variant" id="VSP_059543" description="In isoform 5." evidence="3">
    <location>
        <begin position="150"/>
        <end position="403"/>
    </location>
</feature>
<feature type="sequence variant" id="VAR_061650" description="In dbSNP:rs55882158.">
    <original>P</original>
    <variation>L</variation>
    <location>
        <position position="461"/>
    </location>
</feature>
<feature type="sequence conflict" description="In Ref. 2; BAG61434." evidence="3" ref="2">
    <original>A</original>
    <variation>T</variation>
    <location>
        <position position="57"/>
    </location>
</feature>
<feature type="sequence conflict" description="In Ref. 1; AAC73005." evidence="3" ref="1">
    <original>N</original>
    <variation>H</variation>
    <location>
        <position position="335"/>
    </location>
</feature>
<feature type="sequence conflict" description="In Ref. 2; BAG61434." evidence="3" ref="2">
    <original>K</original>
    <variation>R</variation>
    <location>
        <position position="562"/>
    </location>
</feature>
<accession>O14772</accession>
<accession>A0A0A0MRP2</accession>
<accession>A6NMH3</accession>
<accession>B4DRX2</accession>
<accession>B4E2Y7</accession>
<accession>E9PNQ2</accession>
<accession>Q8N5J7</accession>
<protein>
    <recommendedName>
        <fullName evidence="3">Fucose-1-phosphate guanylyltransferase</fullName>
        <ecNumber evidence="2">2.7.7.30</ecNumber>
    </recommendedName>
    <alternativeName>
        <fullName>GDP-L-fucose diphosphorylase</fullName>
    </alternativeName>
    <alternativeName>
        <fullName>GDP-L-fucose pyrophosphorylase</fullName>
    </alternativeName>
</protein>
<sequence>MRAVRRGLREGGAMAAARDPPEVSLREATQRKLRRFSELRGKLVARGEFWDIVAITAADEKQELAYNQQLSEKLKRKELPLGVQYHVFVDPAGAKIGNGGSTLCALQCLEKLYGDKWNSFTILLIHSGGYSQRLPNASALGKIFTALPLGNPIYQMLELKLAMYIDFPLNMNPGILVTCADDIELYSIGEFEFIRFDKPGFTALAHPSSLTIGTTHGVFVLDPFDDLKHRDLEYRSCHRFLHKPSIEKMYQFNAVCRPGNFCQQDFAGGDIADLKLDSDYVYTDSLFYMDHKSAKMLLAFYEKIGTLSCEIDAYGDFLQALGPGATVEYTRNTSNVIKEESELVEMRQRIFHLLKGTSLNVVVLNNSKFYHIGTTEEYLFYFTSDNSLKSELGLQSITFSIFPDIPECSGKTSCIIQSILDSRCSVAPGSVVEYSRLGPDVSVGENCIISGSYILTKAALPAHSFVCSLSLKMNRCLKYATMAFGVQDNLKKSVKTLSDIKLLQFFGVCFLSCLDVWNLKVTEELFSGNKTCLSLWTARIFPVCSSLSDSVITSLKMLNAVKNKSAFSLNSYKLLSIEEMLIYKDVEDMITYREQIFLEISLKSSLM</sequence>
<gene>
    <name evidence="5" type="primary">FPGT</name>
    <name type="synonym">GFPP</name>
</gene>
<dbReference type="EC" id="2.7.7.30" evidence="2"/>
<dbReference type="EMBL" id="AF017445">
    <property type="protein sequence ID" value="AAC73005.1"/>
    <property type="status" value="ALT_INIT"/>
    <property type="molecule type" value="mRNA"/>
</dbReference>
<dbReference type="EMBL" id="AF017446">
    <property type="protein sequence ID" value="AAC82511.1"/>
    <property type="status" value="ALT_SEQ"/>
    <property type="molecule type" value="Genomic_DNA"/>
</dbReference>
<dbReference type="EMBL" id="AK299468">
    <property type="protein sequence ID" value="BAG61434.1"/>
    <property type="molecule type" value="mRNA"/>
</dbReference>
<dbReference type="EMBL" id="AK304490">
    <property type="protein sequence ID" value="BAG65299.1"/>
    <property type="status" value="ALT_SEQ"/>
    <property type="molecule type" value="mRNA"/>
</dbReference>
<dbReference type="EMBL" id="AC098692">
    <property type="status" value="NOT_ANNOTATED_CDS"/>
    <property type="molecule type" value="Genomic_DNA"/>
</dbReference>
<dbReference type="EMBL" id="BC032308">
    <property type="protein sequence ID" value="AAH32308.1"/>
    <property type="status" value="ALT_INIT"/>
    <property type="molecule type" value="mRNA"/>
</dbReference>
<dbReference type="CCDS" id="CCDS55606.1">
    <molecule id="O14772-2"/>
</dbReference>
<dbReference type="CCDS" id="CCDS55607.1">
    <molecule id="O14772-3"/>
</dbReference>
<dbReference type="RefSeq" id="NP_001186257.3">
    <molecule id="O14772-2"/>
    <property type="nucleotide sequence ID" value="NM_001199328.3"/>
</dbReference>
<dbReference type="RefSeq" id="NP_001186258.3">
    <molecule id="O14772-3"/>
    <property type="nucleotide sequence ID" value="NM_001199329.3"/>
</dbReference>
<dbReference type="RefSeq" id="NP_003829.3">
    <property type="nucleotide sequence ID" value="NM_003838.4"/>
</dbReference>
<dbReference type="BioGRID" id="114318">
    <property type="interactions" value="5"/>
</dbReference>
<dbReference type="FunCoup" id="O14772">
    <property type="interactions" value="1772"/>
</dbReference>
<dbReference type="IntAct" id="O14772">
    <property type="interactions" value="2"/>
</dbReference>
<dbReference type="STRING" id="9606.ENSP00000359935"/>
<dbReference type="GlyGen" id="O14772">
    <property type="glycosylation" value="1 site, 1 O-linked glycan (1 site)"/>
</dbReference>
<dbReference type="iPTMnet" id="O14772"/>
<dbReference type="PhosphoSitePlus" id="O14772"/>
<dbReference type="BioMuta" id="FPGT"/>
<dbReference type="jPOST" id="O14772"/>
<dbReference type="MassIVE" id="O14772"/>
<dbReference type="PaxDb" id="9606-ENSP00000359935"/>
<dbReference type="PeptideAtlas" id="O14772"/>
<dbReference type="ProteomicsDB" id="1539"/>
<dbReference type="ProteomicsDB" id="22483"/>
<dbReference type="ProteomicsDB" id="48223">
    <molecule id="O14772-1"/>
</dbReference>
<dbReference type="Pumba" id="O14772"/>
<dbReference type="Antibodypedia" id="53161">
    <property type="antibodies" value="159 antibodies from 21 providers"/>
</dbReference>
<dbReference type="DNASU" id="8790"/>
<dbReference type="Ensembl" id="ENST00000370894.9">
    <molecule id="O14772-3"/>
    <property type="protein sequence ID" value="ENSP00000359931.4"/>
    <property type="gene ID" value="ENSG00000254685.8"/>
</dbReference>
<dbReference type="Ensembl" id="ENST00000534056.5">
    <molecule id="O14772-2"/>
    <property type="protein sequence ID" value="ENSP00000432819.1"/>
    <property type="gene ID" value="ENSG00000254685.8"/>
</dbReference>
<dbReference type="GeneID" id="8790"/>
<dbReference type="KEGG" id="hsa:8790"/>
<dbReference type="UCSC" id="uc001dgb.4">
    <property type="organism name" value="human"/>
</dbReference>
<dbReference type="UCSC" id="uc057hpq.1">
    <molecule id="O14772-1"/>
    <property type="organism name" value="human"/>
</dbReference>
<dbReference type="AGR" id="HGNC:3825"/>
<dbReference type="CTD" id="8790"/>
<dbReference type="DisGeNET" id="8790"/>
<dbReference type="GeneCards" id="FPGT"/>
<dbReference type="HGNC" id="HGNC:3825">
    <property type="gene designation" value="FPGT"/>
</dbReference>
<dbReference type="HPA" id="ENSG00000254685">
    <property type="expression patterns" value="Low tissue specificity"/>
</dbReference>
<dbReference type="MIM" id="603609">
    <property type="type" value="gene"/>
</dbReference>
<dbReference type="neXtProt" id="NX_O14772"/>
<dbReference type="OpenTargets" id="ENSG00000254685"/>
<dbReference type="PharmGKB" id="PA28243"/>
<dbReference type="VEuPathDB" id="HostDB:ENSG00000254685"/>
<dbReference type="eggNOG" id="ENOG502QRKZ">
    <property type="taxonomic scope" value="Eukaryota"/>
</dbReference>
<dbReference type="GeneTree" id="ENSGT00780000122095"/>
<dbReference type="HOGENOM" id="CLU_1577964_0_0_1"/>
<dbReference type="InParanoid" id="O14772"/>
<dbReference type="OMA" id="DMIAYRE"/>
<dbReference type="OrthoDB" id="10062280at2759"/>
<dbReference type="PAN-GO" id="O14772">
    <property type="GO annotations" value="0 GO annotations based on evolutionary models"/>
</dbReference>
<dbReference type="PhylomeDB" id="O14772"/>
<dbReference type="TreeFam" id="TF328750"/>
<dbReference type="BRENDA" id="2.7.7.30">
    <property type="organism ID" value="2681"/>
</dbReference>
<dbReference type="PathwayCommons" id="O14772"/>
<dbReference type="Reactome" id="R-HSA-6787639">
    <property type="pathway name" value="GDP-fucose biosynthesis"/>
</dbReference>
<dbReference type="BioGRID-ORCS" id="8790">
    <property type="hits" value="6 hits in 972 CRISPR screens"/>
</dbReference>
<dbReference type="GeneWiki" id="FPGT"/>
<dbReference type="GenomeRNAi" id="8790"/>
<dbReference type="Pharos" id="O14772">
    <property type="development level" value="Tbio"/>
</dbReference>
<dbReference type="Proteomes" id="UP000005640">
    <property type="component" value="Chromosome 1"/>
</dbReference>
<dbReference type="RNAct" id="O14772">
    <property type="molecule type" value="protein"/>
</dbReference>
<dbReference type="Bgee" id="ENSG00000254685">
    <property type="expression patterns" value="Expressed in monocyte and 166 other cell types or tissues"/>
</dbReference>
<dbReference type="ExpressionAtlas" id="O14772">
    <property type="expression patterns" value="baseline and differential"/>
</dbReference>
<dbReference type="GO" id="GO:0005737">
    <property type="term" value="C:cytoplasm"/>
    <property type="evidence" value="ECO:0000304"/>
    <property type="project" value="ProtInc"/>
</dbReference>
<dbReference type="GO" id="GO:0005829">
    <property type="term" value="C:cytosol"/>
    <property type="evidence" value="ECO:0000304"/>
    <property type="project" value="Reactome"/>
</dbReference>
<dbReference type="GO" id="GO:0047341">
    <property type="term" value="F:fucose-1-phosphate guanylyltransferase activity"/>
    <property type="evidence" value="ECO:0000314"/>
    <property type="project" value="UniProtKB"/>
</dbReference>
<dbReference type="GO" id="GO:0005525">
    <property type="term" value="F:GTP binding"/>
    <property type="evidence" value="ECO:0007669"/>
    <property type="project" value="UniProtKB-KW"/>
</dbReference>
<dbReference type="GO" id="GO:0006004">
    <property type="term" value="P:fucose metabolic process"/>
    <property type="evidence" value="ECO:0000304"/>
    <property type="project" value="ProtInc"/>
</dbReference>
<dbReference type="GO" id="GO:0042350">
    <property type="term" value="P:GDP-L-fucose biosynthetic process"/>
    <property type="evidence" value="ECO:0000304"/>
    <property type="project" value="Reactome"/>
</dbReference>
<dbReference type="Gene3D" id="2.160.10.10">
    <property type="entry name" value="Hexapeptide repeat proteins"/>
    <property type="match status" value="1"/>
</dbReference>
<dbReference type="InterPro" id="IPR012120">
    <property type="entry name" value="Fucose-1-phosphate_GuaTrfase"/>
</dbReference>
<dbReference type="InterPro" id="IPR012887">
    <property type="entry name" value="GDP_fucose_pyrophosphorylase"/>
</dbReference>
<dbReference type="InterPro" id="IPR011004">
    <property type="entry name" value="Trimer_LpxA-like_sf"/>
</dbReference>
<dbReference type="PANTHER" id="PTHR15045">
    <property type="entry name" value="FUCOSE-1-PHOSPHATE GUANYLYLTRANSFERASE"/>
    <property type="match status" value="1"/>
</dbReference>
<dbReference type="PANTHER" id="PTHR15045:SF1">
    <property type="entry name" value="FUCOSE-1-PHOSPHATE GUANYLYLTRANSFERASE"/>
    <property type="match status" value="1"/>
</dbReference>
<dbReference type="Pfam" id="PF07959">
    <property type="entry name" value="Fucose_pyrophosphorylase"/>
    <property type="match status" value="1"/>
</dbReference>
<dbReference type="PIRSF" id="PIRSF036640">
    <property type="entry name" value="FPGT"/>
    <property type="match status" value="1"/>
</dbReference>
<dbReference type="SUPFAM" id="SSF51161">
    <property type="entry name" value="Trimeric LpxA-like enzymes"/>
    <property type="match status" value="1"/>
</dbReference>
<proteinExistence type="evidence at protein level"/>